<protein>
    <recommendedName>
        <fullName evidence="1">Cytochrome b559 subunit beta</fullName>
    </recommendedName>
    <alternativeName>
        <fullName evidence="1">PSII reaction center subunit VI</fullName>
    </alternativeName>
</protein>
<evidence type="ECO:0000255" key="1">
    <source>
        <dbReference type="HAMAP-Rule" id="MF_00643"/>
    </source>
</evidence>
<proteinExistence type="inferred from homology"/>
<sequence length="10" mass="1180">SISAMQFIQR</sequence>
<comment type="function">
    <text evidence="1">This b-type cytochrome is tightly associated with the reaction center of photosystem II (PSII). PSII is a light-driven water:plastoquinone oxidoreductase that uses light energy to abstract electrons from H(2)O, generating O(2) and a proton gradient subsequently used for ATP formation. It consists of a core antenna complex that captures photons, and an electron transfer chain that converts photonic excitation into a charge separation.</text>
</comment>
<comment type="cofactor">
    <cofactor evidence="1">
        <name>heme b</name>
        <dbReference type="ChEBI" id="CHEBI:60344"/>
    </cofactor>
    <text evidence="1">With its partner (PsbE) binds heme. PSII binds additional chlorophylls, carotenoids and specific lipids.</text>
</comment>
<comment type="subunit">
    <text evidence="1">Heterodimer of an alpha subunit and a beta subunit. PSII is composed of 1 copy each of membrane proteins PsbA, PsbB, PsbC, PsbD, PsbE, PsbF, PsbH, PsbI, PsbJ, PsbK, PsbL, PsbM, PsbT, PsbX, PsbY, PsbZ, Ycf12, at least 3 peripheral proteins of the oxygen-evolving complex and a large number of cofactors. It forms dimeric complexes.</text>
</comment>
<comment type="subcellular location">
    <subcellularLocation>
        <location evidence="1">Plastid</location>
        <location evidence="1">Chloroplast thylakoid membrane</location>
        <topology evidence="1">Single-pass membrane protein</topology>
    </subcellularLocation>
</comment>
<comment type="similarity">
    <text evidence="1">Belongs to the PsbE/PsbF family.</text>
</comment>
<geneLocation type="chloroplast"/>
<organism>
    <name type="scientific">Capsicum annuum</name>
    <name type="common">Capsicum pepper</name>
    <dbReference type="NCBI Taxonomy" id="4072"/>
    <lineage>
        <taxon>Eukaryota</taxon>
        <taxon>Viridiplantae</taxon>
        <taxon>Streptophyta</taxon>
        <taxon>Embryophyta</taxon>
        <taxon>Tracheophyta</taxon>
        <taxon>Spermatophyta</taxon>
        <taxon>Magnoliopsida</taxon>
        <taxon>eudicotyledons</taxon>
        <taxon>Gunneridae</taxon>
        <taxon>Pentapetalae</taxon>
        <taxon>asterids</taxon>
        <taxon>lamiids</taxon>
        <taxon>Solanales</taxon>
        <taxon>Solanaceae</taxon>
        <taxon>Solanoideae</taxon>
        <taxon>Capsiceae</taxon>
        <taxon>Capsicum</taxon>
    </lineage>
</organism>
<gene>
    <name evidence="1" type="primary">psbF</name>
</gene>
<keyword id="KW-0150">Chloroplast</keyword>
<keyword id="KW-0249">Electron transport</keyword>
<keyword id="KW-0349">Heme</keyword>
<keyword id="KW-0408">Iron</keyword>
<keyword id="KW-0472">Membrane</keyword>
<keyword id="KW-0479">Metal-binding</keyword>
<keyword id="KW-0602">Photosynthesis</keyword>
<keyword id="KW-0604">Photosystem II</keyword>
<keyword id="KW-0934">Plastid</keyword>
<keyword id="KW-0793">Thylakoid</keyword>
<keyword id="KW-0812">Transmembrane</keyword>
<keyword id="KW-1133">Transmembrane helix</keyword>
<keyword id="KW-0813">Transport</keyword>
<accession>Q03367</accession>
<reference key="1">
    <citation type="journal article" date="1992" name="Plant Mol. Biol.">
        <title>The psbL gene from bell pepper (Capsicum annuum): plastid RNA editing also occurs in non-photosynthetic chromoplasts.</title>
        <authorList>
            <person name="Kuntz M."/>
            <person name="Camara B."/>
            <person name="Weil J.-H."/>
            <person name="Schantz R."/>
        </authorList>
    </citation>
    <scope>NUCLEOTIDE SEQUENCE [GENOMIC DNA]</scope>
    <source>
        <strain>cv. Lamuyo</strain>
        <tissue>Fruit</tissue>
        <tissue>Leaf</tissue>
    </source>
</reference>
<feature type="chain" id="PRO_0000200368" description="Cytochrome b559 subunit beta">
    <location>
        <begin position="1" status="less than"/>
        <end position="10"/>
    </location>
</feature>
<feature type="transmembrane region" description="Helical" evidence="1">
    <location>
        <begin position="1" status="less than"/>
        <end position="1"/>
    </location>
</feature>
<feature type="non-terminal residue">
    <location>
        <position position="1"/>
    </location>
</feature>
<dbReference type="EMBL" id="X65570">
    <property type="protein sequence ID" value="CAA46539.1"/>
    <property type="molecule type" value="Genomic_DNA"/>
</dbReference>
<dbReference type="PIR" id="S28055">
    <property type="entry name" value="S28055"/>
</dbReference>
<dbReference type="GO" id="GO:0009535">
    <property type="term" value="C:chloroplast thylakoid membrane"/>
    <property type="evidence" value="ECO:0007669"/>
    <property type="project" value="UniProtKB-SubCell"/>
</dbReference>
<dbReference type="GO" id="GO:0009523">
    <property type="term" value="C:photosystem II"/>
    <property type="evidence" value="ECO:0007669"/>
    <property type="project" value="UniProtKB-KW"/>
</dbReference>
<dbReference type="GO" id="GO:0046872">
    <property type="term" value="F:metal ion binding"/>
    <property type="evidence" value="ECO:0007669"/>
    <property type="project" value="UniProtKB-KW"/>
</dbReference>
<dbReference type="GO" id="GO:0015979">
    <property type="term" value="P:photosynthesis"/>
    <property type="evidence" value="ECO:0007669"/>
    <property type="project" value="UniProtKB-KW"/>
</dbReference>
<name>PSBF_CAPAN</name>